<evidence type="ECO:0000255" key="1">
    <source>
        <dbReference type="HAMAP-Rule" id="MF_00508"/>
    </source>
</evidence>
<evidence type="ECO:0000305" key="2"/>
<comment type="function">
    <text evidence="1">Involved in the binding of tRNA to the ribosomes.</text>
</comment>
<comment type="subunit">
    <text evidence="1">Part of the 30S ribosomal subunit.</text>
</comment>
<comment type="similarity">
    <text evidence="1">Belongs to the universal ribosomal protein uS10 family.</text>
</comment>
<name>RS10_SHEB9</name>
<proteinExistence type="inferred from homology"/>
<organism>
    <name type="scientific">Shewanella baltica (strain OS195)</name>
    <dbReference type="NCBI Taxonomy" id="399599"/>
    <lineage>
        <taxon>Bacteria</taxon>
        <taxon>Pseudomonadati</taxon>
        <taxon>Pseudomonadota</taxon>
        <taxon>Gammaproteobacteria</taxon>
        <taxon>Alteromonadales</taxon>
        <taxon>Shewanellaceae</taxon>
        <taxon>Shewanella</taxon>
    </lineage>
</organism>
<gene>
    <name evidence="1" type="primary">rpsJ</name>
    <name type="ordered locus">Sbal195_0199</name>
</gene>
<dbReference type="EMBL" id="CP000891">
    <property type="protein sequence ID" value="ABX47381.1"/>
    <property type="molecule type" value="Genomic_DNA"/>
</dbReference>
<dbReference type="RefSeq" id="WP_006083601.1">
    <property type="nucleotide sequence ID" value="NC_009997.1"/>
</dbReference>
<dbReference type="SMR" id="A9KWA1"/>
<dbReference type="GeneID" id="67441759"/>
<dbReference type="KEGG" id="sbn:Sbal195_0199"/>
<dbReference type="HOGENOM" id="CLU_122625_1_3_6"/>
<dbReference type="Proteomes" id="UP000000770">
    <property type="component" value="Chromosome"/>
</dbReference>
<dbReference type="GO" id="GO:1990904">
    <property type="term" value="C:ribonucleoprotein complex"/>
    <property type="evidence" value="ECO:0007669"/>
    <property type="project" value="UniProtKB-KW"/>
</dbReference>
<dbReference type="GO" id="GO:0005840">
    <property type="term" value="C:ribosome"/>
    <property type="evidence" value="ECO:0007669"/>
    <property type="project" value="UniProtKB-KW"/>
</dbReference>
<dbReference type="GO" id="GO:0003735">
    <property type="term" value="F:structural constituent of ribosome"/>
    <property type="evidence" value="ECO:0007669"/>
    <property type="project" value="InterPro"/>
</dbReference>
<dbReference type="GO" id="GO:0000049">
    <property type="term" value="F:tRNA binding"/>
    <property type="evidence" value="ECO:0007669"/>
    <property type="project" value="UniProtKB-UniRule"/>
</dbReference>
<dbReference type="GO" id="GO:0006412">
    <property type="term" value="P:translation"/>
    <property type="evidence" value="ECO:0007669"/>
    <property type="project" value="UniProtKB-UniRule"/>
</dbReference>
<dbReference type="FunFam" id="3.30.70.600:FF:000001">
    <property type="entry name" value="30S ribosomal protein S10"/>
    <property type="match status" value="1"/>
</dbReference>
<dbReference type="Gene3D" id="3.30.70.600">
    <property type="entry name" value="Ribosomal protein S10 domain"/>
    <property type="match status" value="1"/>
</dbReference>
<dbReference type="HAMAP" id="MF_00508">
    <property type="entry name" value="Ribosomal_uS10"/>
    <property type="match status" value="1"/>
</dbReference>
<dbReference type="InterPro" id="IPR001848">
    <property type="entry name" value="Ribosomal_uS10"/>
</dbReference>
<dbReference type="InterPro" id="IPR018268">
    <property type="entry name" value="Ribosomal_uS10_CS"/>
</dbReference>
<dbReference type="InterPro" id="IPR027486">
    <property type="entry name" value="Ribosomal_uS10_dom"/>
</dbReference>
<dbReference type="InterPro" id="IPR036838">
    <property type="entry name" value="Ribosomal_uS10_dom_sf"/>
</dbReference>
<dbReference type="NCBIfam" id="NF001861">
    <property type="entry name" value="PRK00596.1"/>
    <property type="match status" value="1"/>
</dbReference>
<dbReference type="NCBIfam" id="TIGR01049">
    <property type="entry name" value="rpsJ_bact"/>
    <property type="match status" value="1"/>
</dbReference>
<dbReference type="PANTHER" id="PTHR11700">
    <property type="entry name" value="30S RIBOSOMAL PROTEIN S10 FAMILY MEMBER"/>
    <property type="match status" value="1"/>
</dbReference>
<dbReference type="Pfam" id="PF00338">
    <property type="entry name" value="Ribosomal_S10"/>
    <property type="match status" value="1"/>
</dbReference>
<dbReference type="PRINTS" id="PR00971">
    <property type="entry name" value="RIBOSOMALS10"/>
</dbReference>
<dbReference type="SMART" id="SM01403">
    <property type="entry name" value="Ribosomal_S10"/>
    <property type="match status" value="1"/>
</dbReference>
<dbReference type="SUPFAM" id="SSF54999">
    <property type="entry name" value="Ribosomal protein S10"/>
    <property type="match status" value="1"/>
</dbReference>
<dbReference type="PROSITE" id="PS00361">
    <property type="entry name" value="RIBOSOMAL_S10"/>
    <property type="match status" value="1"/>
</dbReference>
<keyword id="KW-0687">Ribonucleoprotein</keyword>
<keyword id="KW-0689">Ribosomal protein</keyword>
<feature type="chain" id="PRO_1000081568" description="Small ribosomal subunit protein uS10">
    <location>
        <begin position="1"/>
        <end position="103"/>
    </location>
</feature>
<accession>A9KWA1</accession>
<reference key="1">
    <citation type="submission" date="2007-11" db="EMBL/GenBank/DDBJ databases">
        <title>Complete sequence of chromosome of Shewanella baltica OS195.</title>
        <authorList>
            <consortium name="US DOE Joint Genome Institute"/>
            <person name="Copeland A."/>
            <person name="Lucas S."/>
            <person name="Lapidus A."/>
            <person name="Barry K."/>
            <person name="Glavina del Rio T."/>
            <person name="Dalin E."/>
            <person name="Tice H."/>
            <person name="Pitluck S."/>
            <person name="Chain P."/>
            <person name="Malfatti S."/>
            <person name="Shin M."/>
            <person name="Vergez L."/>
            <person name="Schmutz J."/>
            <person name="Larimer F."/>
            <person name="Land M."/>
            <person name="Hauser L."/>
            <person name="Kyrpides N."/>
            <person name="Kim E."/>
            <person name="Brettar I."/>
            <person name="Rodrigues J."/>
            <person name="Konstantinidis K."/>
            <person name="Klappenbach J."/>
            <person name="Hofle M."/>
            <person name="Tiedje J."/>
            <person name="Richardson P."/>
        </authorList>
    </citation>
    <scope>NUCLEOTIDE SEQUENCE [LARGE SCALE GENOMIC DNA]</scope>
    <source>
        <strain>OS195</strain>
    </source>
</reference>
<protein>
    <recommendedName>
        <fullName evidence="1">Small ribosomal subunit protein uS10</fullName>
    </recommendedName>
    <alternativeName>
        <fullName evidence="2">30S ribosomal protein S10</fullName>
    </alternativeName>
</protein>
<sequence>MQNQRIRIRLKGFDHRLIDQSTAEIVETAKRTGAQVRGPIPLPTRKERYTILISPHVNKDARDQYELRTHKRLVDIVEPTEKTVDALMRLDLAAGVDVQISLG</sequence>